<protein>
    <recommendedName>
        <fullName evidence="1">Diaminopimelate epimerase</fullName>
        <shortName evidence="1">DAP epimerase</shortName>
        <ecNumber evidence="1">5.1.1.7</ecNumber>
    </recommendedName>
    <alternativeName>
        <fullName evidence="1">PLP-independent amino acid racemase</fullName>
    </alternativeName>
</protein>
<keyword id="KW-0028">Amino-acid biosynthesis</keyword>
<keyword id="KW-0963">Cytoplasm</keyword>
<keyword id="KW-0413">Isomerase</keyword>
<keyword id="KW-0457">Lysine biosynthesis</keyword>
<keyword id="KW-1185">Reference proteome</keyword>
<name>DAPF_ALLAM</name>
<sequence length="303" mass="32938">MGNRVEFAKMNGLGNKILVVDMRGRADRVMPQAAIALAGNAETHFDQIMAIHDPKLAGTFAYIDIINCDGTLAQACGNGTRCVVQALSAETGLKAFTFQTLAGILNAVEHDDRTVSVDMGSPVFDWNRIPLSEEFHDTSRIELQIGPIDAPVLHSPAVMSMGNPHAVFWVDRDPMSYDLERFGPLLENHPLFPEKANITLAQVTSRTTMTTRTWERGAGLTLACGSAACAAGVSAARTGRAERKVTITVASSPNRQALDIEWRERDGHVIMTGAAEWEWAGQLDPQTGDWQREQQAGHEASVS</sequence>
<dbReference type="EC" id="5.1.1.7" evidence="1"/>
<dbReference type="EMBL" id="CP000633">
    <property type="protein sequence ID" value="ACM38042.1"/>
    <property type="molecule type" value="Genomic_DNA"/>
</dbReference>
<dbReference type="RefSeq" id="WP_015917453.1">
    <property type="nucleotide sequence ID" value="NC_011989.1"/>
</dbReference>
<dbReference type="SMR" id="B9JUB9"/>
<dbReference type="STRING" id="311402.Avi_4198"/>
<dbReference type="KEGG" id="avi:Avi_4198"/>
<dbReference type="eggNOG" id="COG0253">
    <property type="taxonomic scope" value="Bacteria"/>
</dbReference>
<dbReference type="HOGENOM" id="CLU_053306_1_0_5"/>
<dbReference type="UniPathway" id="UPA00034">
    <property type="reaction ID" value="UER00025"/>
</dbReference>
<dbReference type="Proteomes" id="UP000001596">
    <property type="component" value="Chromosome 1"/>
</dbReference>
<dbReference type="GO" id="GO:0005829">
    <property type="term" value="C:cytosol"/>
    <property type="evidence" value="ECO:0007669"/>
    <property type="project" value="TreeGrafter"/>
</dbReference>
<dbReference type="GO" id="GO:0008837">
    <property type="term" value="F:diaminopimelate epimerase activity"/>
    <property type="evidence" value="ECO:0007669"/>
    <property type="project" value="UniProtKB-UniRule"/>
</dbReference>
<dbReference type="GO" id="GO:0009089">
    <property type="term" value="P:lysine biosynthetic process via diaminopimelate"/>
    <property type="evidence" value="ECO:0007669"/>
    <property type="project" value="UniProtKB-UniRule"/>
</dbReference>
<dbReference type="Gene3D" id="3.10.310.10">
    <property type="entry name" value="Diaminopimelate Epimerase, Chain A, domain 1"/>
    <property type="match status" value="2"/>
</dbReference>
<dbReference type="HAMAP" id="MF_00197">
    <property type="entry name" value="DAP_epimerase"/>
    <property type="match status" value="1"/>
</dbReference>
<dbReference type="InterPro" id="IPR018510">
    <property type="entry name" value="DAP_epimerase_AS"/>
</dbReference>
<dbReference type="InterPro" id="IPR001653">
    <property type="entry name" value="DAP_epimerase_DapF"/>
</dbReference>
<dbReference type="NCBIfam" id="TIGR00652">
    <property type="entry name" value="DapF"/>
    <property type="match status" value="1"/>
</dbReference>
<dbReference type="PANTHER" id="PTHR31689:SF0">
    <property type="entry name" value="DIAMINOPIMELATE EPIMERASE"/>
    <property type="match status" value="1"/>
</dbReference>
<dbReference type="PANTHER" id="PTHR31689">
    <property type="entry name" value="DIAMINOPIMELATE EPIMERASE, CHLOROPLASTIC"/>
    <property type="match status" value="1"/>
</dbReference>
<dbReference type="Pfam" id="PF01678">
    <property type="entry name" value="DAP_epimerase"/>
    <property type="match status" value="2"/>
</dbReference>
<dbReference type="SUPFAM" id="SSF54506">
    <property type="entry name" value="Diaminopimelate epimerase-like"/>
    <property type="match status" value="2"/>
</dbReference>
<dbReference type="PROSITE" id="PS01326">
    <property type="entry name" value="DAP_EPIMERASE"/>
    <property type="match status" value="1"/>
</dbReference>
<accession>B9JUB9</accession>
<reference key="1">
    <citation type="journal article" date="2009" name="J. Bacteriol.">
        <title>Genome sequences of three Agrobacterium biovars help elucidate the evolution of multichromosome genomes in bacteria.</title>
        <authorList>
            <person name="Slater S.C."/>
            <person name="Goldman B.S."/>
            <person name="Goodner B."/>
            <person name="Setubal J.C."/>
            <person name="Farrand S.K."/>
            <person name="Nester E.W."/>
            <person name="Burr T.J."/>
            <person name="Banta L."/>
            <person name="Dickerman A.W."/>
            <person name="Paulsen I."/>
            <person name="Otten L."/>
            <person name="Suen G."/>
            <person name="Welch R."/>
            <person name="Almeida N.F."/>
            <person name="Arnold F."/>
            <person name="Burton O.T."/>
            <person name="Du Z."/>
            <person name="Ewing A."/>
            <person name="Godsy E."/>
            <person name="Heisel S."/>
            <person name="Houmiel K.L."/>
            <person name="Jhaveri J."/>
            <person name="Lu J."/>
            <person name="Miller N.M."/>
            <person name="Norton S."/>
            <person name="Chen Q."/>
            <person name="Phoolcharoen W."/>
            <person name="Ohlin V."/>
            <person name="Ondrusek D."/>
            <person name="Pride N."/>
            <person name="Stricklin S.L."/>
            <person name="Sun J."/>
            <person name="Wheeler C."/>
            <person name="Wilson L."/>
            <person name="Zhu H."/>
            <person name="Wood D.W."/>
        </authorList>
    </citation>
    <scope>NUCLEOTIDE SEQUENCE [LARGE SCALE GENOMIC DNA]</scope>
    <source>
        <strain>ATCC BAA-846 / DSM 112012 / S4</strain>
    </source>
</reference>
<proteinExistence type="inferred from homology"/>
<comment type="function">
    <text evidence="1">Catalyzes the stereoinversion of LL-2,6-diaminopimelate (L,L-DAP) to meso-diaminopimelate (meso-DAP), a precursor of L-lysine and an essential component of the bacterial peptidoglycan.</text>
</comment>
<comment type="catalytic activity">
    <reaction evidence="1">
        <text>(2S,6S)-2,6-diaminopimelate = meso-2,6-diaminopimelate</text>
        <dbReference type="Rhea" id="RHEA:15393"/>
        <dbReference type="ChEBI" id="CHEBI:57609"/>
        <dbReference type="ChEBI" id="CHEBI:57791"/>
        <dbReference type="EC" id="5.1.1.7"/>
    </reaction>
</comment>
<comment type="pathway">
    <text evidence="1">Amino-acid biosynthesis; L-lysine biosynthesis via DAP pathway; DL-2,6-diaminopimelate from LL-2,6-diaminopimelate: step 1/1.</text>
</comment>
<comment type="subunit">
    <text evidence="1">Homodimer.</text>
</comment>
<comment type="subcellular location">
    <subcellularLocation>
        <location evidence="1">Cytoplasm</location>
    </subcellularLocation>
</comment>
<comment type="similarity">
    <text evidence="1">Belongs to the diaminopimelate epimerase family.</text>
</comment>
<gene>
    <name evidence="1" type="primary">dapF</name>
    <name type="ordered locus">Avi_4198</name>
</gene>
<evidence type="ECO:0000255" key="1">
    <source>
        <dbReference type="HAMAP-Rule" id="MF_00197"/>
    </source>
</evidence>
<organism>
    <name type="scientific">Allorhizobium ampelinum (strain ATCC BAA-846 / DSM 112012 / S4)</name>
    <name type="common">Agrobacterium vitis (strain S4)</name>
    <dbReference type="NCBI Taxonomy" id="311402"/>
    <lineage>
        <taxon>Bacteria</taxon>
        <taxon>Pseudomonadati</taxon>
        <taxon>Pseudomonadota</taxon>
        <taxon>Alphaproteobacteria</taxon>
        <taxon>Hyphomicrobiales</taxon>
        <taxon>Rhizobiaceae</taxon>
        <taxon>Rhizobium/Agrobacterium group</taxon>
        <taxon>Allorhizobium</taxon>
        <taxon>Allorhizobium ampelinum</taxon>
    </lineage>
</organism>
<feature type="chain" id="PRO_1000124397" description="Diaminopimelate epimerase">
    <location>
        <begin position="1"/>
        <end position="303"/>
    </location>
</feature>
<feature type="active site" description="Proton donor" evidence="1">
    <location>
        <position position="76"/>
    </location>
</feature>
<feature type="active site" description="Proton acceptor" evidence="1">
    <location>
        <position position="224"/>
    </location>
</feature>
<feature type="binding site" evidence="1">
    <location>
        <position position="15"/>
    </location>
    <ligand>
        <name>substrate</name>
    </ligand>
</feature>
<feature type="binding site" evidence="1">
    <location>
        <position position="47"/>
    </location>
    <ligand>
        <name>substrate</name>
    </ligand>
</feature>
<feature type="binding site" evidence="1">
    <location>
        <position position="67"/>
    </location>
    <ligand>
        <name>substrate</name>
    </ligand>
</feature>
<feature type="binding site" evidence="1">
    <location>
        <begin position="77"/>
        <end position="78"/>
    </location>
    <ligand>
        <name>substrate</name>
    </ligand>
</feature>
<feature type="binding site" evidence="1">
    <location>
        <position position="163"/>
    </location>
    <ligand>
        <name>substrate</name>
    </ligand>
</feature>
<feature type="binding site" evidence="1">
    <location>
        <position position="197"/>
    </location>
    <ligand>
        <name>substrate</name>
    </ligand>
</feature>
<feature type="binding site" evidence="1">
    <location>
        <begin position="215"/>
        <end position="216"/>
    </location>
    <ligand>
        <name>substrate</name>
    </ligand>
</feature>
<feature type="binding site" evidence="1">
    <location>
        <begin position="225"/>
        <end position="226"/>
    </location>
    <ligand>
        <name>substrate</name>
    </ligand>
</feature>
<feature type="site" description="Could be important to modulate the pK values of the two catalytic cysteine residues" evidence="1">
    <location>
        <position position="165"/>
    </location>
</feature>
<feature type="site" description="Could be important to modulate the pK values of the two catalytic cysteine residues" evidence="1">
    <location>
        <position position="215"/>
    </location>
</feature>